<organism>
    <name type="scientific">Homo sapiens</name>
    <name type="common">Human</name>
    <dbReference type="NCBI Taxonomy" id="9606"/>
    <lineage>
        <taxon>Eukaryota</taxon>
        <taxon>Metazoa</taxon>
        <taxon>Chordata</taxon>
        <taxon>Craniata</taxon>
        <taxon>Vertebrata</taxon>
        <taxon>Euteleostomi</taxon>
        <taxon>Mammalia</taxon>
        <taxon>Eutheria</taxon>
        <taxon>Euarchontoglires</taxon>
        <taxon>Primates</taxon>
        <taxon>Haplorrhini</taxon>
        <taxon>Catarrhini</taxon>
        <taxon>Hominidae</taxon>
        <taxon>Homo</taxon>
    </lineage>
</organism>
<dbReference type="EMBL" id="AK058178">
    <property type="protein sequence ID" value="BAB71705.1"/>
    <property type="molecule type" value="mRNA"/>
</dbReference>
<dbReference type="EMBL" id="AC097635">
    <property type="status" value="NOT_ANNOTATED_CDS"/>
    <property type="molecule type" value="Genomic_DNA"/>
</dbReference>
<dbReference type="EMBL" id="BC021717">
    <property type="status" value="NOT_ANNOTATED_CDS"/>
    <property type="molecule type" value="mRNA"/>
</dbReference>
<dbReference type="CCDS" id="CCDS58817.1">
    <molecule id="A8MPX8-1"/>
</dbReference>
<dbReference type="RefSeq" id="NP_001239586.1">
    <molecule id="A8MPX8-1"/>
    <property type="nucleotide sequence ID" value="NM_001252657.2"/>
</dbReference>
<dbReference type="SMR" id="A8MPX8"/>
<dbReference type="BioGRID" id="127396">
    <property type="interactions" value="2"/>
</dbReference>
<dbReference type="FunCoup" id="A8MPX8">
    <property type="interactions" value="16"/>
</dbReference>
<dbReference type="IntAct" id="A8MPX8">
    <property type="interactions" value="2"/>
</dbReference>
<dbReference type="MINT" id="A8MPX8"/>
<dbReference type="STRING" id="9606.ENSP00000373702"/>
<dbReference type="DEPOD" id="PP2D1"/>
<dbReference type="GlyGen" id="A8MPX8">
    <property type="glycosylation" value="1 site, 1 O-linked glycan (1 site)"/>
</dbReference>
<dbReference type="iPTMnet" id="A8MPX8"/>
<dbReference type="PhosphoSitePlus" id="A8MPX8"/>
<dbReference type="BioMuta" id="PP2D1"/>
<dbReference type="PaxDb" id="9606-ENSP00000373702"/>
<dbReference type="PeptideAtlas" id="A8MPX8"/>
<dbReference type="Antibodypedia" id="49756">
    <property type="antibodies" value="7 antibodies from 6 providers"/>
</dbReference>
<dbReference type="DNASU" id="151649"/>
<dbReference type="Ensembl" id="ENST00000333083.11">
    <molecule id="A8MPX8-3"/>
    <property type="protein sequence ID" value="ENSP00000331295.7"/>
    <property type="gene ID" value="ENSG00000183977.14"/>
</dbReference>
<dbReference type="Ensembl" id="ENST00000389050.5">
    <molecule id="A8MPX8-1"/>
    <property type="protein sequence ID" value="ENSP00000373702.4"/>
    <property type="gene ID" value="ENSG00000183977.14"/>
</dbReference>
<dbReference type="GeneID" id="151649"/>
<dbReference type="KEGG" id="hsa:151649"/>
<dbReference type="MANE-Select" id="ENST00000389050.5">
    <property type="protein sequence ID" value="ENSP00000373702.4"/>
    <property type="RefSeq nucleotide sequence ID" value="NM_001252657.2"/>
    <property type="RefSeq protein sequence ID" value="NP_001239586.1"/>
</dbReference>
<dbReference type="UCSC" id="uc021wtw.2">
    <molecule id="A8MPX8-1"/>
    <property type="organism name" value="human"/>
</dbReference>
<dbReference type="AGR" id="HGNC:28406"/>
<dbReference type="CTD" id="151649"/>
<dbReference type="DisGeNET" id="151649"/>
<dbReference type="GeneCards" id="PP2D1"/>
<dbReference type="HGNC" id="HGNC:28406">
    <property type="gene designation" value="PP2D1"/>
</dbReference>
<dbReference type="HPA" id="ENSG00000183977">
    <property type="expression patterns" value="Group enriched (bone marrow, testis)"/>
</dbReference>
<dbReference type="MIM" id="621037">
    <property type="type" value="gene"/>
</dbReference>
<dbReference type="neXtProt" id="NX_A8MPX8"/>
<dbReference type="OpenTargets" id="ENSG00000183977"/>
<dbReference type="VEuPathDB" id="HostDB:ENSG00000183977"/>
<dbReference type="eggNOG" id="KOG0698">
    <property type="taxonomic scope" value="Eukaryota"/>
</dbReference>
<dbReference type="GeneTree" id="ENSGT00390000017863"/>
<dbReference type="HOGENOM" id="CLU_735582_0_0_1"/>
<dbReference type="InParanoid" id="A8MPX8"/>
<dbReference type="OMA" id="NFYEGAA"/>
<dbReference type="OrthoDB" id="343114at2759"/>
<dbReference type="PAN-GO" id="A8MPX8">
    <property type="GO annotations" value="1 GO annotation based on evolutionary models"/>
</dbReference>
<dbReference type="PhylomeDB" id="A8MPX8"/>
<dbReference type="TreeFam" id="TF332888"/>
<dbReference type="PathwayCommons" id="A8MPX8"/>
<dbReference type="SignaLink" id="A8MPX8"/>
<dbReference type="BioGRID-ORCS" id="151649">
    <property type="hits" value="5 hits in 1146 CRISPR screens"/>
</dbReference>
<dbReference type="ChiTaRS" id="PP2D1">
    <property type="organism name" value="human"/>
</dbReference>
<dbReference type="GenomeRNAi" id="151649"/>
<dbReference type="Pharos" id="A8MPX8">
    <property type="development level" value="Tdark"/>
</dbReference>
<dbReference type="PRO" id="PR:A8MPX8"/>
<dbReference type="Proteomes" id="UP000005640">
    <property type="component" value="Chromosome 3"/>
</dbReference>
<dbReference type="RNAct" id="A8MPX8">
    <property type="molecule type" value="protein"/>
</dbReference>
<dbReference type="Bgee" id="ENSG00000183977">
    <property type="expression patterns" value="Expressed in sperm and 100 other cell types or tissues"/>
</dbReference>
<dbReference type="GO" id="GO:0005737">
    <property type="term" value="C:cytoplasm"/>
    <property type="evidence" value="ECO:0000318"/>
    <property type="project" value="GO_Central"/>
</dbReference>
<dbReference type="GO" id="GO:0005634">
    <property type="term" value="C:nucleus"/>
    <property type="evidence" value="ECO:0000318"/>
    <property type="project" value="GO_Central"/>
</dbReference>
<dbReference type="GO" id="GO:0004722">
    <property type="term" value="F:protein serine/threonine phosphatase activity"/>
    <property type="evidence" value="ECO:0007669"/>
    <property type="project" value="InterPro"/>
</dbReference>
<dbReference type="GO" id="GO:0043409">
    <property type="term" value="P:negative regulation of MAPK cascade"/>
    <property type="evidence" value="ECO:0000318"/>
    <property type="project" value="GO_Central"/>
</dbReference>
<dbReference type="GO" id="GO:0007165">
    <property type="term" value="P:signal transduction"/>
    <property type="evidence" value="ECO:0000318"/>
    <property type="project" value="GO_Central"/>
</dbReference>
<dbReference type="CDD" id="cd00143">
    <property type="entry name" value="PP2Cc"/>
    <property type="match status" value="1"/>
</dbReference>
<dbReference type="Gene3D" id="3.60.40.10">
    <property type="entry name" value="PPM-type phosphatase domain"/>
    <property type="match status" value="1"/>
</dbReference>
<dbReference type="InterPro" id="IPR015655">
    <property type="entry name" value="PP2C"/>
</dbReference>
<dbReference type="InterPro" id="IPR036457">
    <property type="entry name" value="PPM-type-like_dom_sf"/>
</dbReference>
<dbReference type="InterPro" id="IPR001932">
    <property type="entry name" value="PPM-type_phosphatase-like_dom"/>
</dbReference>
<dbReference type="PANTHER" id="PTHR13832">
    <property type="entry name" value="PROTEIN PHOSPHATASE 2C"/>
    <property type="match status" value="1"/>
</dbReference>
<dbReference type="PANTHER" id="PTHR13832:SF837">
    <property type="entry name" value="PROTEIN PHOSPHATASE 2C-LIKE DOMAIN-CONTAINING PROTEIN 1"/>
    <property type="match status" value="1"/>
</dbReference>
<dbReference type="Pfam" id="PF00481">
    <property type="entry name" value="PP2C"/>
    <property type="match status" value="1"/>
</dbReference>
<dbReference type="SMART" id="SM00332">
    <property type="entry name" value="PP2Cc"/>
    <property type="match status" value="1"/>
</dbReference>
<dbReference type="SUPFAM" id="SSF81606">
    <property type="entry name" value="PP2C-like"/>
    <property type="match status" value="1"/>
</dbReference>
<dbReference type="PROSITE" id="PS51746">
    <property type="entry name" value="PPM_2"/>
    <property type="match status" value="1"/>
</dbReference>
<accession>A8MPX8</accession>
<accession>Q96LI7</accession>
<proteinExistence type="evidence at protein level"/>
<gene>
    <name type="primary">PP2D1</name>
    <name type="synonym">C3orf48</name>
</gene>
<evidence type="ECO:0000255" key="1">
    <source>
        <dbReference type="PROSITE-ProRule" id="PRU01082"/>
    </source>
</evidence>
<evidence type="ECO:0000256" key="2">
    <source>
        <dbReference type="SAM" id="MobiDB-lite"/>
    </source>
</evidence>
<evidence type="ECO:0000269" key="3">
    <source>
    </source>
</evidence>
<evidence type="ECO:0000269" key="4">
    <source>
    </source>
</evidence>
<evidence type="ECO:0000303" key="5">
    <source>
    </source>
</evidence>
<evidence type="ECO:0000303" key="6">
    <source>
    </source>
</evidence>
<evidence type="ECO:0000305" key="7"/>
<comment type="alternative products">
    <event type="alternative splicing"/>
    <isoform>
        <id>A8MPX8-1</id>
        <name>1</name>
        <sequence type="displayed"/>
    </isoform>
    <isoform>
        <id>A8MPX8-2</id>
        <name>2</name>
        <sequence type="described" ref="VSP_031721 VSP_031722"/>
    </isoform>
    <isoform>
        <id>A8MPX8-3</id>
        <name>3</name>
        <sequence type="described" ref="VSP_031723 VSP_031724"/>
    </isoform>
</comment>
<comment type="similarity">
    <text evidence="7">Belongs to the PP2C family.</text>
</comment>
<comment type="caution">
    <text evidence="7">Although it belongs to the protein phosphatase 2C family, it lacks some of the conserved residues that bind manganese, suggesting it has no phosphatase activity.</text>
</comment>
<comment type="sequence caution" evidence="7">
    <conflict type="frameshift">
        <sequence resource="EMBL" id="BC021717"/>
    </conflict>
</comment>
<name>PP2D1_HUMAN</name>
<protein>
    <recommendedName>
        <fullName>Protein phosphatase 2C-like domain-containing protein 1</fullName>
    </recommendedName>
</protein>
<reference key="1">
    <citation type="journal article" date="2004" name="Nat. Genet.">
        <title>Complete sequencing and characterization of 21,243 full-length human cDNAs.</title>
        <authorList>
            <person name="Ota T."/>
            <person name="Suzuki Y."/>
            <person name="Nishikawa T."/>
            <person name="Otsuki T."/>
            <person name="Sugiyama T."/>
            <person name="Irie R."/>
            <person name="Wakamatsu A."/>
            <person name="Hayashi K."/>
            <person name="Sato H."/>
            <person name="Nagai K."/>
            <person name="Kimura K."/>
            <person name="Makita H."/>
            <person name="Sekine M."/>
            <person name="Obayashi M."/>
            <person name="Nishi T."/>
            <person name="Shibahara T."/>
            <person name="Tanaka T."/>
            <person name="Ishii S."/>
            <person name="Yamamoto J."/>
            <person name="Saito K."/>
            <person name="Kawai Y."/>
            <person name="Isono Y."/>
            <person name="Nakamura Y."/>
            <person name="Nagahari K."/>
            <person name="Murakami K."/>
            <person name="Yasuda T."/>
            <person name="Iwayanagi T."/>
            <person name="Wagatsuma M."/>
            <person name="Shiratori A."/>
            <person name="Sudo H."/>
            <person name="Hosoiri T."/>
            <person name="Kaku Y."/>
            <person name="Kodaira H."/>
            <person name="Kondo H."/>
            <person name="Sugawara M."/>
            <person name="Takahashi M."/>
            <person name="Kanda K."/>
            <person name="Yokoi T."/>
            <person name="Furuya T."/>
            <person name="Kikkawa E."/>
            <person name="Omura Y."/>
            <person name="Abe K."/>
            <person name="Kamihara K."/>
            <person name="Katsuta N."/>
            <person name="Sato K."/>
            <person name="Tanikawa M."/>
            <person name="Yamazaki M."/>
            <person name="Ninomiya K."/>
            <person name="Ishibashi T."/>
            <person name="Yamashita H."/>
            <person name="Murakawa K."/>
            <person name="Fujimori K."/>
            <person name="Tanai H."/>
            <person name="Kimata M."/>
            <person name="Watanabe M."/>
            <person name="Hiraoka S."/>
            <person name="Chiba Y."/>
            <person name="Ishida S."/>
            <person name="Ono Y."/>
            <person name="Takiguchi S."/>
            <person name="Watanabe S."/>
            <person name="Yosida M."/>
            <person name="Hotuta T."/>
            <person name="Kusano J."/>
            <person name="Kanehori K."/>
            <person name="Takahashi-Fujii A."/>
            <person name="Hara H."/>
            <person name="Tanase T.-O."/>
            <person name="Nomura Y."/>
            <person name="Togiya S."/>
            <person name="Komai F."/>
            <person name="Hara R."/>
            <person name="Takeuchi K."/>
            <person name="Arita M."/>
            <person name="Imose N."/>
            <person name="Musashino K."/>
            <person name="Yuuki H."/>
            <person name="Oshima A."/>
            <person name="Sasaki N."/>
            <person name="Aotsuka S."/>
            <person name="Yoshikawa Y."/>
            <person name="Matsunawa H."/>
            <person name="Ichihara T."/>
            <person name="Shiohata N."/>
            <person name="Sano S."/>
            <person name="Moriya S."/>
            <person name="Momiyama H."/>
            <person name="Satoh N."/>
            <person name="Takami S."/>
            <person name="Terashima Y."/>
            <person name="Suzuki O."/>
            <person name="Nakagawa S."/>
            <person name="Senoh A."/>
            <person name="Mizoguchi H."/>
            <person name="Goto Y."/>
            <person name="Shimizu F."/>
            <person name="Wakebe H."/>
            <person name="Hishigaki H."/>
            <person name="Watanabe T."/>
            <person name="Sugiyama A."/>
            <person name="Takemoto M."/>
            <person name="Kawakami B."/>
            <person name="Yamazaki M."/>
            <person name="Watanabe K."/>
            <person name="Kumagai A."/>
            <person name="Itakura S."/>
            <person name="Fukuzumi Y."/>
            <person name="Fujimori Y."/>
            <person name="Komiyama M."/>
            <person name="Tashiro H."/>
            <person name="Tanigami A."/>
            <person name="Fujiwara T."/>
            <person name="Ono T."/>
            <person name="Yamada K."/>
            <person name="Fujii Y."/>
            <person name="Ozaki K."/>
            <person name="Hirao M."/>
            <person name="Ohmori Y."/>
            <person name="Kawabata A."/>
            <person name="Hikiji T."/>
            <person name="Kobatake N."/>
            <person name="Inagaki H."/>
            <person name="Ikema Y."/>
            <person name="Okamoto S."/>
            <person name="Okitani R."/>
            <person name="Kawakami T."/>
            <person name="Noguchi S."/>
            <person name="Itoh T."/>
            <person name="Shigeta K."/>
            <person name="Senba T."/>
            <person name="Matsumura K."/>
            <person name="Nakajima Y."/>
            <person name="Mizuno T."/>
            <person name="Morinaga M."/>
            <person name="Sasaki M."/>
            <person name="Togashi T."/>
            <person name="Oyama M."/>
            <person name="Hata H."/>
            <person name="Watanabe M."/>
            <person name="Komatsu T."/>
            <person name="Mizushima-Sugano J."/>
            <person name="Satoh T."/>
            <person name="Shirai Y."/>
            <person name="Takahashi Y."/>
            <person name="Nakagawa K."/>
            <person name="Okumura K."/>
            <person name="Nagase T."/>
            <person name="Nomura N."/>
            <person name="Kikuchi H."/>
            <person name="Masuho Y."/>
            <person name="Yamashita R."/>
            <person name="Nakai K."/>
            <person name="Yada T."/>
            <person name="Nakamura Y."/>
            <person name="Ohara O."/>
            <person name="Isogai T."/>
            <person name="Sugano S."/>
        </authorList>
    </citation>
    <scope>NUCLEOTIDE SEQUENCE [LARGE SCALE MRNA] (ISOFORM 2)</scope>
    <scope>VARIANT THR-260</scope>
    <source>
        <tissue>Testis</tissue>
    </source>
</reference>
<reference key="2">
    <citation type="journal article" date="2006" name="Nature">
        <title>The DNA sequence, annotation and analysis of human chromosome 3.</title>
        <authorList>
            <person name="Muzny D.M."/>
            <person name="Scherer S.E."/>
            <person name="Kaul R."/>
            <person name="Wang J."/>
            <person name="Yu J."/>
            <person name="Sudbrak R."/>
            <person name="Buhay C.J."/>
            <person name="Chen R."/>
            <person name="Cree A."/>
            <person name="Ding Y."/>
            <person name="Dugan-Rocha S."/>
            <person name="Gill R."/>
            <person name="Gunaratne P."/>
            <person name="Harris R.A."/>
            <person name="Hawes A.C."/>
            <person name="Hernandez J."/>
            <person name="Hodgson A.V."/>
            <person name="Hume J."/>
            <person name="Jackson A."/>
            <person name="Khan Z.M."/>
            <person name="Kovar-Smith C."/>
            <person name="Lewis L.R."/>
            <person name="Lozado R.J."/>
            <person name="Metzker M.L."/>
            <person name="Milosavljevic A."/>
            <person name="Miner G.R."/>
            <person name="Morgan M.B."/>
            <person name="Nazareth L.V."/>
            <person name="Scott G."/>
            <person name="Sodergren E."/>
            <person name="Song X.-Z."/>
            <person name="Steffen D."/>
            <person name="Wei S."/>
            <person name="Wheeler D.A."/>
            <person name="Wright M.W."/>
            <person name="Worley K.C."/>
            <person name="Yuan Y."/>
            <person name="Zhang Z."/>
            <person name="Adams C.Q."/>
            <person name="Ansari-Lari M.A."/>
            <person name="Ayele M."/>
            <person name="Brown M.J."/>
            <person name="Chen G."/>
            <person name="Chen Z."/>
            <person name="Clendenning J."/>
            <person name="Clerc-Blankenburg K.P."/>
            <person name="Chen R."/>
            <person name="Chen Z."/>
            <person name="Davis C."/>
            <person name="Delgado O."/>
            <person name="Dinh H.H."/>
            <person name="Dong W."/>
            <person name="Draper H."/>
            <person name="Ernst S."/>
            <person name="Fu G."/>
            <person name="Gonzalez-Garay M.L."/>
            <person name="Garcia D.K."/>
            <person name="Gillett W."/>
            <person name="Gu J."/>
            <person name="Hao B."/>
            <person name="Haugen E."/>
            <person name="Havlak P."/>
            <person name="He X."/>
            <person name="Hennig S."/>
            <person name="Hu S."/>
            <person name="Huang W."/>
            <person name="Jackson L.R."/>
            <person name="Jacob L.S."/>
            <person name="Kelly S.H."/>
            <person name="Kube M."/>
            <person name="Levy R."/>
            <person name="Li Z."/>
            <person name="Liu B."/>
            <person name="Liu J."/>
            <person name="Liu W."/>
            <person name="Lu J."/>
            <person name="Maheshwari M."/>
            <person name="Nguyen B.-V."/>
            <person name="Okwuonu G.O."/>
            <person name="Palmeiri A."/>
            <person name="Pasternak S."/>
            <person name="Perez L.M."/>
            <person name="Phelps K.A."/>
            <person name="Plopper F.J."/>
            <person name="Qiang B."/>
            <person name="Raymond C."/>
            <person name="Rodriguez R."/>
            <person name="Saenphimmachak C."/>
            <person name="Santibanez J."/>
            <person name="Shen H."/>
            <person name="Shen Y."/>
            <person name="Subramanian S."/>
            <person name="Tabor P.E."/>
            <person name="Verduzco D."/>
            <person name="Waldron L."/>
            <person name="Wang J."/>
            <person name="Wang J."/>
            <person name="Wang Q."/>
            <person name="Williams G.A."/>
            <person name="Wong G.K.-S."/>
            <person name="Yao Z."/>
            <person name="Zhang J."/>
            <person name="Zhang X."/>
            <person name="Zhao G."/>
            <person name="Zhou J."/>
            <person name="Zhou Y."/>
            <person name="Nelson D."/>
            <person name="Lehrach H."/>
            <person name="Reinhardt R."/>
            <person name="Naylor S.L."/>
            <person name="Yang H."/>
            <person name="Olson M."/>
            <person name="Weinstock G."/>
            <person name="Gibbs R.A."/>
        </authorList>
    </citation>
    <scope>NUCLEOTIDE SEQUENCE [LARGE SCALE GENOMIC DNA]</scope>
</reference>
<reference key="3">
    <citation type="journal article" date="2004" name="Genome Res.">
        <title>The status, quality, and expansion of the NIH full-length cDNA project: the Mammalian Gene Collection (MGC).</title>
        <authorList>
            <consortium name="The MGC Project Team"/>
        </authorList>
    </citation>
    <scope>NUCLEOTIDE SEQUENCE [LARGE SCALE MRNA] (ISOFORM 3)</scope>
    <scope>VARIANT THR-260</scope>
    <source>
        <tissue>Testis</tissue>
    </source>
</reference>
<keyword id="KW-0025">Alternative splicing</keyword>
<keyword id="KW-1267">Proteomics identification</keyword>
<keyword id="KW-1185">Reference proteome</keyword>
<feature type="chain" id="PRO_0000320672" description="Protein phosphatase 2C-like domain-containing protein 1">
    <location>
        <begin position="1"/>
        <end position="630"/>
    </location>
</feature>
<feature type="domain" description="PPM-type phosphatase" evidence="1">
    <location>
        <begin position="170"/>
        <end position="621"/>
    </location>
</feature>
<feature type="region of interest" description="Disordered" evidence="2">
    <location>
        <begin position="557"/>
        <end position="578"/>
    </location>
</feature>
<feature type="compositionally biased region" description="Basic and acidic residues" evidence="2">
    <location>
        <begin position="557"/>
        <end position="569"/>
    </location>
</feature>
<feature type="splice variant" id="VSP_031723" description="In isoform 3." evidence="6">
    <original>NVQAVLCRNGKG</original>
    <variation>TRRNEHLPEYYG</variation>
    <location>
        <begin position="365"/>
        <end position="376"/>
    </location>
</feature>
<feature type="splice variant" id="VSP_031721" description="In isoform 2." evidence="5">
    <original>NVQA</original>
    <variation>MYIE</variation>
    <location>
        <begin position="365"/>
        <end position="368"/>
    </location>
</feature>
<feature type="splice variant" id="VSP_031722" description="In isoform 2." evidence="5">
    <location>
        <begin position="369"/>
        <end position="630"/>
    </location>
</feature>
<feature type="splice variant" id="VSP_031724" description="In isoform 3." evidence="6">
    <location>
        <begin position="377"/>
        <end position="630"/>
    </location>
</feature>
<feature type="sequence variant" id="VAR_039272" description="In dbSNP:rs9882323.">
    <original>R</original>
    <variation>H</variation>
    <location>
        <position position="37"/>
    </location>
</feature>
<feature type="sequence variant" id="VAR_039273" description="In dbSNP:rs7652446.">
    <original>F</original>
    <variation>L</variation>
    <location>
        <position position="123"/>
    </location>
</feature>
<feature type="sequence variant" id="VAR_039274" description="In dbSNP:rs4103004." evidence="3 4">
    <original>A</original>
    <variation>T</variation>
    <location>
        <position position="260"/>
    </location>
</feature>
<sequence length="630" mass="71643">MSTNNALRVFWKSREWNMKTSTFDSDEDILLLPKRKRFRKKKSRPVRHTKRHEEEQVYEQGTTLPCSICKHEIDLTGIFLHKKQHVALATLGFQWMGRKKPQPSVIAVQRQFMISKLLSSFMFTEKTLQSINNAFELLWKKQIPAYYKIFDNIDRSVIYSQKICHLLIKGVGICEDRNSTWKADMNDKFTVVSNFGNKPNVCFFGLFDGHHGASAAELTSMELPVLLLHQLSKFDPSYQMTTDEQQIINSFYTVFREEYAAIEDLFSAINKTEAVRCEYEDTHKAFAKAFWRMDRLLGLGRKEVSRVQWSGCSAVTCILEGKPKSPYAHKNWKRKNTHDGLAESSPSQEMPKIISGILHVANTGNVQAVLCRNGKGFCLTKEHTTRNTNERRRILQNGAVISSNEPYGLVEGQVKTTRGLGFHGNLKLKKSIIPAPQTISVPIDDLCQFLIVATNGLWEVLDKEEVTALAMTTFHMYKETYCPIIPNKSPSKGPLLFSTSEPNLTKSQSNIHVLFQYKSVSEVRVSTTNSKENLSDSNYSKYCIYNPENVETFPAETTHRKPCSEKVTDRPTSVNDVATNEKESDTKSFYEGAAEYVSHELVNAALLAGSRDNITVMVIFLNGSEYQLLT</sequence>